<feature type="chain" id="PRO_0000350065" description="Dual-specificity RNA methyltransferase RlmN">
    <location>
        <begin position="1"/>
        <end position="411"/>
    </location>
</feature>
<feature type="domain" description="Radical SAM core" evidence="2">
    <location>
        <begin position="131"/>
        <end position="380"/>
    </location>
</feature>
<feature type="active site" description="Proton acceptor" evidence="1">
    <location>
        <position position="125"/>
    </location>
</feature>
<feature type="active site" description="S-methylcysteine intermediate" evidence="1">
    <location>
        <position position="383"/>
    </location>
</feature>
<feature type="binding site" evidence="1">
    <location>
        <position position="145"/>
    </location>
    <ligand>
        <name>[4Fe-4S] cluster</name>
        <dbReference type="ChEBI" id="CHEBI:49883"/>
        <note>4Fe-4S-S-AdoMet</note>
    </ligand>
</feature>
<feature type="binding site" evidence="1">
    <location>
        <position position="149"/>
    </location>
    <ligand>
        <name>[4Fe-4S] cluster</name>
        <dbReference type="ChEBI" id="CHEBI:49883"/>
        <note>4Fe-4S-S-AdoMet</note>
    </ligand>
</feature>
<feature type="binding site" evidence="1">
    <location>
        <position position="152"/>
    </location>
    <ligand>
        <name>[4Fe-4S] cluster</name>
        <dbReference type="ChEBI" id="CHEBI:49883"/>
        <note>4Fe-4S-S-AdoMet</note>
    </ligand>
</feature>
<feature type="binding site" evidence="1">
    <location>
        <begin position="209"/>
        <end position="210"/>
    </location>
    <ligand>
        <name>S-adenosyl-L-methionine</name>
        <dbReference type="ChEBI" id="CHEBI:59789"/>
    </ligand>
</feature>
<feature type="binding site" evidence="1">
    <location>
        <position position="241"/>
    </location>
    <ligand>
        <name>S-adenosyl-L-methionine</name>
        <dbReference type="ChEBI" id="CHEBI:59789"/>
    </ligand>
</feature>
<feature type="binding site" evidence="1">
    <location>
        <begin position="263"/>
        <end position="265"/>
    </location>
    <ligand>
        <name>S-adenosyl-L-methionine</name>
        <dbReference type="ChEBI" id="CHEBI:59789"/>
    </ligand>
</feature>
<feature type="binding site" evidence="1">
    <location>
        <position position="340"/>
    </location>
    <ligand>
        <name>S-adenosyl-L-methionine</name>
        <dbReference type="ChEBI" id="CHEBI:59789"/>
    </ligand>
</feature>
<feature type="disulfide bond" description="(transient)" evidence="1">
    <location>
        <begin position="138"/>
        <end position="383"/>
    </location>
</feature>
<evidence type="ECO:0000255" key="1">
    <source>
        <dbReference type="HAMAP-Rule" id="MF_01849"/>
    </source>
</evidence>
<evidence type="ECO:0000255" key="2">
    <source>
        <dbReference type="PROSITE-ProRule" id="PRU01266"/>
    </source>
</evidence>
<sequence length="411" mass="45866">MSISFDLTIDDTRDQLARHARASLEAKPSLIGMSREEMAAALIAAGVPERQVKMRISQLWHWLYVRGVSDFADMRNISKDLRAMLAQHFTIARPEVVEEQISQDGTRKWLFRFPPRGAGRPVEIESVYIPEEGRGTLCISSQVGCTLTCSFCHTGTQKLVRNLTSEEILAQLLTARDRLGDFPDKDTPDGAMVPAEGRKITNIVMMGMGEPLYNFEEVKKALLIASDGDGLSLSKRRITLSTSGVVPEIYRTGDEIGVMLAISLHAVRDELRDILVPINKKYPLAELIKACREYPGLSNAKRITFEYVMLKDINDSLDDAKLLVKLLQGIPAKINLIPFNPWPGTNYQCSDWEQIEKFADYVNAAGYASPIRTPRGRDILAACGQLKSESERLRKSERLALEAMMIAGHGE</sequence>
<accession>Q8YEL1</accession>
<name>RLMN_BRUME</name>
<reference key="1">
    <citation type="journal article" date="2002" name="Proc. Natl. Acad. Sci. U.S.A.">
        <title>The genome sequence of the facultative intracellular pathogen Brucella melitensis.</title>
        <authorList>
            <person name="DelVecchio V.G."/>
            <person name="Kapatral V."/>
            <person name="Redkar R.J."/>
            <person name="Patra G."/>
            <person name="Mujer C."/>
            <person name="Los T."/>
            <person name="Ivanova N."/>
            <person name="Anderson I."/>
            <person name="Bhattacharyya A."/>
            <person name="Lykidis A."/>
            <person name="Reznik G."/>
            <person name="Jablonski L."/>
            <person name="Larsen N."/>
            <person name="D'Souza M."/>
            <person name="Bernal A."/>
            <person name="Mazur M."/>
            <person name="Goltsman E."/>
            <person name="Selkov E."/>
            <person name="Elzer P.H."/>
            <person name="Hagius S."/>
            <person name="O'Callaghan D."/>
            <person name="Letesson J.-J."/>
            <person name="Haselkorn R."/>
            <person name="Kyrpides N.C."/>
            <person name="Overbeek R."/>
        </authorList>
    </citation>
    <scope>NUCLEOTIDE SEQUENCE [LARGE SCALE GENOMIC DNA]</scope>
    <source>
        <strain>ATCC 23456 / CCUG 17765 / NCTC 10094 / 16M</strain>
    </source>
</reference>
<comment type="function">
    <text evidence="1">Specifically methylates position 2 of adenine 2503 in 23S rRNA and position 2 of adenine 37 in tRNAs. m2A2503 modification seems to play a crucial role in the proofreading step occurring at the peptidyl transferase center and thus would serve to optimize ribosomal fidelity.</text>
</comment>
<comment type="catalytic activity">
    <reaction evidence="1">
        <text>adenosine(2503) in 23S rRNA + 2 reduced [2Fe-2S]-[ferredoxin] + 2 S-adenosyl-L-methionine = 2-methyladenosine(2503) in 23S rRNA + 5'-deoxyadenosine + L-methionine + 2 oxidized [2Fe-2S]-[ferredoxin] + S-adenosyl-L-homocysteine</text>
        <dbReference type="Rhea" id="RHEA:42916"/>
        <dbReference type="Rhea" id="RHEA-COMP:10000"/>
        <dbReference type="Rhea" id="RHEA-COMP:10001"/>
        <dbReference type="Rhea" id="RHEA-COMP:10152"/>
        <dbReference type="Rhea" id="RHEA-COMP:10282"/>
        <dbReference type="ChEBI" id="CHEBI:17319"/>
        <dbReference type="ChEBI" id="CHEBI:33737"/>
        <dbReference type="ChEBI" id="CHEBI:33738"/>
        <dbReference type="ChEBI" id="CHEBI:57844"/>
        <dbReference type="ChEBI" id="CHEBI:57856"/>
        <dbReference type="ChEBI" id="CHEBI:59789"/>
        <dbReference type="ChEBI" id="CHEBI:74411"/>
        <dbReference type="ChEBI" id="CHEBI:74497"/>
        <dbReference type="EC" id="2.1.1.192"/>
    </reaction>
</comment>
<comment type="catalytic activity">
    <reaction evidence="1">
        <text>adenosine(37) in tRNA + 2 reduced [2Fe-2S]-[ferredoxin] + 2 S-adenosyl-L-methionine = 2-methyladenosine(37) in tRNA + 5'-deoxyadenosine + L-methionine + 2 oxidized [2Fe-2S]-[ferredoxin] + S-adenosyl-L-homocysteine</text>
        <dbReference type="Rhea" id="RHEA:43332"/>
        <dbReference type="Rhea" id="RHEA-COMP:10000"/>
        <dbReference type="Rhea" id="RHEA-COMP:10001"/>
        <dbReference type="Rhea" id="RHEA-COMP:10162"/>
        <dbReference type="Rhea" id="RHEA-COMP:10485"/>
        <dbReference type="ChEBI" id="CHEBI:17319"/>
        <dbReference type="ChEBI" id="CHEBI:33737"/>
        <dbReference type="ChEBI" id="CHEBI:33738"/>
        <dbReference type="ChEBI" id="CHEBI:57844"/>
        <dbReference type="ChEBI" id="CHEBI:57856"/>
        <dbReference type="ChEBI" id="CHEBI:59789"/>
        <dbReference type="ChEBI" id="CHEBI:74411"/>
        <dbReference type="ChEBI" id="CHEBI:74497"/>
        <dbReference type="EC" id="2.1.1.192"/>
    </reaction>
</comment>
<comment type="cofactor">
    <cofactor evidence="1">
        <name>[4Fe-4S] cluster</name>
        <dbReference type="ChEBI" id="CHEBI:49883"/>
    </cofactor>
    <text evidence="1">Binds 1 [4Fe-4S] cluster. The cluster is coordinated with 3 cysteines and an exchangeable S-adenosyl-L-methionine.</text>
</comment>
<comment type="subcellular location">
    <subcellularLocation>
        <location evidence="1">Cytoplasm</location>
    </subcellularLocation>
</comment>
<comment type="miscellaneous">
    <text evidence="1">Reaction proceeds by a ping-pong mechanism involving intermediate methylation of a conserved cysteine residue.</text>
</comment>
<comment type="similarity">
    <text evidence="1">Belongs to the radical SAM superfamily. RlmN family.</text>
</comment>
<dbReference type="EC" id="2.1.1.192" evidence="1"/>
<dbReference type="EMBL" id="AE008917">
    <property type="protein sequence ID" value="AAL53048.1"/>
    <property type="molecule type" value="Genomic_DNA"/>
</dbReference>
<dbReference type="PIR" id="AE3485">
    <property type="entry name" value="AE3485"/>
</dbReference>
<dbReference type="RefSeq" id="WP_002968086.1">
    <property type="nucleotide sequence ID" value="NZ_GG703778.1"/>
</dbReference>
<dbReference type="SMR" id="Q8YEL1"/>
<dbReference type="GeneID" id="97534497"/>
<dbReference type="KEGG" id="bme:BMEI1867"/>
<dbReference type="KEGG" id="bmel:DK63_1621"/>
<dbReference type="PATRIC" id="fig|224914.52.peg.1710"/>
<dbReference type="eggNOG" id="COG0820">
    <property type="taxonomic scope" value="Bacteria"/>
</dbReference>
<dbReference type="PhylomeDB" id="Q8YEL1"/>
<dbReference type="Proteomes" id="UP000000419">
    <property type="component" value="Chromosome I"/>
</dbReference>
<dbReference type="GO" id="GO:0005737">
    <property type="term" value="C:cytoplasm"/>
    <property type="evidence" value="ECO:0007669"/>
    <property type="project" value="UniProtKB-SubCell"/>
</dbReference>
<dbReference type="GO" id="GO:0051539">
    <property type="term" value="F:4 iron, 4 sulfur cluster binding"/>
    <property type="evidence" value="ECO:0007669"/>
    <property type="project" value="UniProtKB-UniRule"/>
</dbReference>
<dbReference type="GO" id="GO:0046872">
    <property type="term" value="F:metal ion binding"/>
    <property type="evidence" value="ECO:0007669"/>
    <property type="project" value="UniProtKB-KW"/>
</dbReference>
<dbReference type="GO" id="GO:0070040">
    <property type="term" value="F:rRNA (adenine(2503)-C2-)-methyltransferase activity"/>
    <property type="evidence" value="ECO:0007669"/>
    <property type="project" value="UniProtKB-UniRule"/>
</dbReference>
<dbReference type="GO" id="GO:0019843">
    <property type="term" value="F:rRNA binding"/>
    <property type="evidence" value="ECO:0007669"/>
    <property type="project" value="UniProtKB-UniRule"/>
</dbReference>
<dbReference type="GO" id="GO:0002935">
    <property type="term" value="F:tRNA (adenine(37)-C2)-methyltransferase activity"/>
    <property type="evidence" value="ECO:0007669"/>
    <property type="project" value="UniProtKB-UniRule"/>
</dbReference>
<dbReference type="GO" id="GO:0000049">
    <property type="term" value="F:tRNA binding"/>
    <property type="evidence" value="ECO:0007669"/>
    <property type="project" value="UniProtKB-UniRule"/>
</dbReference>
<dbReference type="GO" id="GO:0070475">
    <property type="term" value="P:rRNA base methylation"/>
    <property type="evidence" value="ECO:0007669"/>
    <property type="project" value="UniProtKB-UniRule"/>
</dbReference>
<dbReference type="GO" id="GO:0030488">
    <property type="term" value="P:tRNA methylation"/>
    <property type="evidence" value="ECO:0007669"/>
    <property type="project" value="UniProtKB-UniRule"/>
</dbReference>
<dbReference type="CDD" id="cd01335">
    <property type="entry name" value="Radical_SAM"/>
    <property type="match status" value="1"/>
</dbReference>
<dbReference type="FunFam" id="3.20.20.70:FF:000008">
    <property type="entry name" value="Dual-specificity RNA methyltransferase RlmN"/>
    <property type="match status" value="1"/>
</dbReference>
<dbReference type="Gene3D" id="1.10.150.530">
    <property type="match status" value="1"/>
</dbReference>
<dbReference type="Gene3D" id="3.20.20.70">
    <property type="entry name" value="Aldolase class I"/>
    <property type="match status" value="1"/>
</dbReference>
<dbReference type="HAMAP" id="MF_01849">
    <property type="entry name" value="RNA_methyltr_RlmN"/>
    <property type="match status" value="1"/>
</dbReference>
<dbReference type="InterPro" id="IPR013785">
    <property type="entry name" value="Aldolase_TIM"/>
</dbReference>
<dbReference type="InterPro" id="IPR040072">
    <property type="entry name" value="Methyltransferase_A"/>
</dbReference>
<dbReference type="InterPro" id="IPR048641">
    <property type="entry name" value="RlmN_N"/>
</dbReference>
<dbReference type="InterPro" id="IPR027492">
    <property type="entry name" value="RNA_MTrfase_RlmN"/>
</dbReference>
<dbReference type="InterPro" id="IPR004383">
    <property type="entry name" value="rRNA_lsu_MTrfase_RlmN/Cfr"/>
</dbReference>
<dbReference type="InterPro" id="IPR007197">
    <property type="entry name" value="rSAM"/>
</dbReference>
<dbReference type="NCBIfam" id="TIGR00048">
    <property type="entry name" value="rRNA_mod_RlmN"/>
    <property type="match status" value="1"/>
</dbReference>
<dbReference type="PANTHER" id="PTHR30544">
    <property type="entry name" value="23S RRNA METHYLTRANSFERASE"/>
    <property type="match status" value="1"/>
</dbReference>
<dbReference type="PANTHER" id="PTHR30544:SF5">
    <property type="entry name" value="RADICAL SAM CORE DOMAIN-CONTAINING PROTEIN"/>
    <property type="match status" value="1"/>
</dbReference>
<dbReference type="Pfam" id="PF04055">
    <property type="entry name" value="Radical_SAM"/>
    <property type="match status" value="1"/>
</dbReference>
<dbReference type="Pfam" id="PF21016">
    <property type="entry name" value="RlmN_N"/>
    <property type="match status" value="1"/>
</dbReference>
<dbReference type="PIRSF" id="PIRSF006004">
    <property type="entry name" value="CHP00048"/>
    <property type="match status" value="1"/>
</dbReference>
<dbReference type="SFLD" id="SFLDF00275">
    <property type="entry name" value="adenosine_C2_methyltransferase"/>
    <property type="match status" value="1"/>
</dbReference>
<dbReference type="SFLD" id="SFLDG01062">
    <property type="entry name" value="methyltransferase_(Class_A)"/>
    <property type="match status" value="1"/>
</dbReference>
<dbReference type="SUPFAM" id="SSF102114">
    <property type="entry name" value="Radical SAM enzymes"/>
    <property type="match status" value="1"/>
</dbReference>
<dbReference type="PROSITE" id="PS51918">
    <property type="entry name" value="RADICAL_SAM"/>
    <property type="match status" value="1"/>
</dbReference>
<organism>
    <name type="scientific">Brucella melitensis biotype 1 (strain ATCC 23456 / CCUG 17765 / NCTC 10094 / 16M)</name>
    <dbReference type="NCBI Taxonomy" id="224914"/>
    <lineage>
        <taxon>Bacteria</taxon>
        <taxon>Pseudomonadati</taxon>
        <taxon>Pseudomonadota</taxon>
        <taxon>Alphaproteobacteria</taxon>
        <taxon>Hyphomicrobiales</taxon>
        <taxon>Brucellaceae</taxon>
        <taxon>Brucella/Ochrobactrum group</taxon>
        <taxon>Brucella</taxon>
    </lineage>
</organism>
<gene>
    <name evidence="1" type="primary">rlmN</name>
    <name type="ordered locus">BMEI1867</name>
</gene>
<keyword id="KW-0004">4Fe-4S</keyword>
<keyword id="KW-0963">Cytoplasm</keyword>
<keyword id="KW-1015">Disulfide bond</keyword>
<keyword id="KW-0408">Iron</keyword>
<keyword id="KW-0411">Iron-sulfur</keyword>
<keyword id="KW-0479">Metal-binding</keyword>
<keyword id="KW-0489">Methyltransferase</keyword>
<keyword id="KW-0698">rRNA processing</keyword>
<keyword id="KW-0949">S-adenosyl-L-methionine</keyword>
<keyword id="KW-0808">Transferase</keyword>
<keyword id="KW-0819">tRNA processing</keyword>
<proteinExistence type="inferred from homology"/>
<protein>
    <recommendedName>
        <fullName evidence="1">Dual-specificity RNA methyltransferase RlmN</fullName>
        <ecNumber evidence="1">2.1.1.192</ecNumber>
    </recommendedName>
    <alternativeName>
        <fullName evidence="1">23S rRNA (adenine(2503)-C(2))-methyltransferase</fullName>
    </alternativeName>
    <alternativeName>
        <fullName evidence="1">23S rRNA m2A2503 methyltransferase</fullName>
    </alternativeName>
    <alternativeName>
        <fullName evidence="1">Ribosomal RNA large subunit methyltransferase N</fullName>
    </alternativeName>
    <alternativeName>
        <fullName evidence="1">tRNA (adenine(37)-C(2))-methyltransferase</fullName>
    </alternativeName>
    <alternativeName>
        <fullName evidence="1">tRNA m2A37 methyltransferase</fullName>
    </alternativeName>
</protein>